<reference key="1">
    <citation type="journal article" date="2002" name="Nature">
        <title>The genome sequence of Schizosaccharomyces pombe.</title>
        <authorList>
            <person name="Wood V."/>
            <person name="Gwilliam R."/>
            <person name="Rajandream M.A."/>
            <person name="Lyne M.H."/>
            <person name="Lyne R."/>
            <person name="Stewart A."/>
            <person name="Sgouros J.G."/>
            <person name="Peat N."/>
            <person name="Hayles J."/>
            <person name="Baker S.G."/>
            <person name="Basham D."/>
            <person name="Bowman S."/>
            <person name="Brooks K."/>
            <person name="Brown D."/>
            <person name="Brown S."/>
            <person name="Chillingworth T."/>
            <person name="Churcher C.M."/>
            <person name="Collins M."/>
            <person name="Connor R."/>
            <person name="Cronin A."/>
            <person name="Davis P."/>
            <person name="Feltwell T."/>
            <person name="Fraser A."/>
            <person name="Gentles S."/>
            <person name="Goble A."/>
            <person name="Hamlin N."/>
            <person name="Harris D.E."/>
            <person name="Hidalgo J."/>
            <person name="Hodgson G."/>
            <person name="Holroyd S."/>
            <person name="Hornsby T."/>
            <person name="Howarth S."/>
            <person name="Huckle E.J."/>
            <person name="Hunt S."/>
            <person name="Jagels K."/>
            <person name="James K.D."/>
            <person name="Jones L."/>
            <person name="Jones M."/>
            <person name="Leather S."/>
            <person name="McDonald S."/>
            <person name="McLean J."/>
            <person name="Mooney P."/>
            <person name="Moule S."/>
            <person name="Mungall K.L."/>
            <person name="Murphy L.D."/>
            <person name="Niblett D."/>
            <person name="Odell C."/>
            <person name="Oliver K."/>
            <person name="O'Neil S."/>
            <person name="Pearson D."/>
            <person name="Quail M.A."/>
            <person name="Rabbinowitsch E."/>
            <person name="Rutherford K.M."/>
            <person name="Rutter S."/>
            <person name="Saunders D."/>
            <person name="Seeger K."/>
            <person name="Sharp S."/>
            <person name="Skelton J."/>
            <person name="Simmonds M.N."/>
            <person name="Squares R."/>
            <person name="Squares S."/>
            <person name="Stevens K."/>
            <person name="Taylor K."/>
            <person name="Taylor R.G."/>
            <person name="Tivey A."/>
            <person name="Walsh S.V."/>
            <person name="Warren T."/>
            <person name="Whitehead S."/>
            <person name="Woodward J.R."/>
            <person name="Volckaert G."/>
            <person name="Aert R."/>
            <person name="Robben J."/>
            <person name="Grymonprez B."/>
            <person name="Weltjens I."/>
            <person name="Vanstreels E."/>
            <person name="Rieger M."/>
            <person name="Schaefer M."/>
            <person name="Mueller-Auer S."/>
            <person name="Gabel C."/>
            <person name="Fuchs M."/>
            <person name="Duesterhoeft A."/>
            <person name="Fritzc C."/>
            <person name="Holzer E."/>
            <person name="Moestl D."/>
            <person name="Hilbert H."/>
            <person name="Borzym K."/>
            <person name="Langer I."/>
            <person name="Beck A."/>
            <person name="Lehrach H."/>
            <person name="Reinhardt R."/>
            <person name="Pohl T.M."/>
            <person name="Eger P."/>
            <person name="Zimmermann W."/>
            <person name="Wedler H."/>
            <person name="Wambutt R."/>
            <person name="Purnelle B."/>
            <person name="Goffeau A."/>
            <person name="Cadieu E."/>
            <person name="Dreano S."/>
            <person name="Gloux S."/>
            <person name="Lelaure V."/>
            <person name="Mottier S."/>
            <person name="Galibert F."/>
            <person name="Aves S.J."/>
            <person name="Xiang Z."/>
            <person name="Hunt C."/>
            <person name="Moore K."/>
            <person name="Hurst S.M."/>
            <person name="Lucas M."/>
            <person name="Rochet M."/>
            <person name="Gaillardin C."/>
            <person name="Tallada V.A."/>
            <person name="Garzon A."/>
            <person name="Thode G."/>
            <person name="Daga R.R."/>
            <person name="Cruzado L."/>
            <person name="Jimenez J."/>
            <person name="Sanchez M."/>
            <person name="del Rey F."/>
            <person name="Benito J."/>
            <person name="Dominguez A."/>
            <person name="Revuelta J.L."/>
            <person name="Moreno S."/>
            <person name="Armstrong J."/>
            <person name="Forsburg S.L."/>
            <person name="Cerutti L."/>
            <person name="Lowe T."/>
            <person name="McCombie W.R."/>
            <person name="Paulsen I."/>
            <person name="Potashkin J."/>
            <person name="Shpakovski G.V."/>
            <person name="Ussery D."/>
            <person name="Barrell B.G."/>
            <person name="Nurse P."/>
        </authorList>
    </citation>
    <scope>NUCLEOTIDE SEQUENCE [LARGE SCALE GENOMIC DNA]</scope>
    <source>
        <strain>972 / ATCC 24843</strain>
    </source>
</reference>
<reference key="2">
    <citation type="journal article" date="2006" name="Nat. Biotechnol.">
        <title>ORFeome cloning and global analysis of protein localization in the fission yeast Schizosaccharomyces pombe.</title>
        <authorList>
            <person name="Matsuyama A."/>
            <person name="Arai R."/>
            <person name="Yashiroda Y."/>
            <person name="Shirai A."/>
            <person name="Kamata A."/>
            <person name="Sekido S."/>
            <person name="Kobayashi Y."/>
            <person name="Hashimoto A."/>
            <person name="Hamamoto M."/>
            <person name="Hiraoka Y."/>
            <person name="Horinouchi S."/>
            <person name="Yoshida M."/>
        </authorList>
    </citation>
    <scope>SUBCELLULAR LOCATION [LARGE SCALE ANALYSIS]</scope>
</reference>
<evidence type="ECO:0000269" key="1">
    <source>
    </source>
</evidence>
<organism>
    <name type="scientific">Schizosaccharomyces pombe (strain 972 / ATCC 24843)</name>
    <name type="common">Fission yeast</name>
    <dbReference type="NCBI Taxonomy" id="284812"/>
    <lineage>
        <taxon>Eukaryota</taxon>
        <taxon>Fungi</taxon>
        <taxon>Dikarya</taxon>
        <taxon>Ascomycota</taxon>
        <taxon>Taphrinomycotina</taxon>
        <taxon>Schizosaccharomycetes</taxon>
        <taxon>Schizosaccharomycetales</taxon>
        <taxon>Schizosaccharomycetaceae</taxon>
        <taxon>Schizosaccharomyces</taxon>
    </lineage>
</organism>
<feature type="chain" id="PRO_0000304042" description="Uncharacterized protein C1442.11c">
    <location>
        <begin position="1"/>
        <end position="182"/>
    </location>
</feature>
<comment type="subcellular location">
    <subcellularLocation>
        <location evidence="1">Mitochondrion</location>
    </subcellularLocation>
</comment>
<proteinExistence type="predicted"/>
<sequence>MLIVNRNPKSLVRGYCKKDIVLRNLDGWLFDMITISTIFKLYNQICSLSSTDRKKTSISNKLQQEFCIMDINKVGRNFISLGKIRSSKRRNAILSYQTIISSFPHNHVQKLFQRTQSTNMIYTKLEYFGHSLFFYFTAFTLSFKDRKILMQADVFFRLKLVFKIAFFFTQTTFLNKKENREL</sequence>
<protein>
    <recommendedName>
        <fullName>Uncharacterized protein C1442.11c</fullName>
    </recommendedName>
</protein>
<name>YQ7B_SCHPO</name>
<keyword id="KW-0496">Mitochondrion</keyword>
<keyword id="KW-1185">Reference proteome</keyword>
<dbReference type="EMBL" id="CU329672">
    <property type="protein sequence ID" value="CAA21445.1"/>
    <property type="molecule type" value="Genomic_DNA"/>
</dbReference>
<dbReference type="PIR" id="T40976">
    <property type="entry name" value="T40976"/>
</dbReference>
<dbReference type="RefSeq" id="NP_588325.1">
    <property type="nucleotide sequence ID" value="NM_001023316.1"/>
</dbReference>
<dbReference type="BioGRID" id="275640">
    <property type="interactions" value="15"/>
</dbReference>
<dbReference type="PaxDb" id="4896-SPCC1442.11c.1"/>
<dbReference type="EnsemblFungi" id="SPCC1442.11c.1">
    <property type="protein sequence ID" value="SPCC1442.11c.1:pep"/>
    <property type="gene ID" value="SPCC1442.11c"/>
</dbReference>
<dbReference type="KEGG" id="spo:2539068"/>
<dbReference type="PomBase" id="SPCC1442.11c"/>
<dbReference type="VEuPathDB" id="FungiDB:SPCC1442.11c"/>
<dbReference type="HOGENOM" id="CLU_1482818_0_0_1"/>
<dbReference type="InParanoid" id="O94583"/>
<dbReference type="PRO" id="PR:O94583"/>
<dbReference type="Proteomes" id="UP000002485">
    <property type="component" value="Chromosome III"/>
</dbReference>
<dbReference type="GO" id="GO:0005739">
    <property type="term" value="C:mitochondrion"/>
    <property type="evidence" value="ECO:0007005"/>
    <property type="project" value="PomBase"/>
</dbReference>
<accession>O94583</accession>
<gene>
    <name type="ORF">SPCC1442.11c</name>
</gene>